<gene>
    <name evidence="1" type="primary">guaA</name>
    <name type="ordered locus">all2846</name>
</gene>
<accession>Q8YT80</accession>
<dbReference type="EC" id="6.3.5.2" evidence="1"/>
<dbReference type="EMBL" id="BA000019">
    <property type="protein sequence ID" value="BAB74545.1"/>
    <property type="molecule type" value="Genomic_DNA"/>
</dbReference>
<dbReference type="PIR" id="AG2161">
    <property type="entry name" value="AG2161"/>
</dbReference>
<dbReference type="RefSeq" id="WP_010996997.1">
    <property type="nucleotide sequence ID" value="NZ_RSCN01000003.1"/>
</dbReference>
<dbReference type="SMR" id="Q8YT80"/>
<dbReference type="STRING" id="103690.gene:10494880"/>
<dbReference type="KEGG" id="ana:all2846"/>
<dbReference type="eggNOG" id="COG0518">
    <property type="taxonomic scope" value="Bacteria"/>
</dbReference>
<dbReference type="eggNOG" id="COG0519">
    <property type="taxonomic scope" value="Bacteria"/>
</dbReference>
<dbReference type="OrthoDB" id="9802219at2"/>
<dbReference type="UniPathway" id="UPA00189">
    <property type="reaction ID" value="UER00296"/>
</dbReference>
<dbReference type="Proteomes" id="UP000002483">
    <property type="component" value="Chromosome"/>
</dbReference>
<dbReference type="GO" id="GO:0005829">
    <property type="term" value="C:cytosol"/>
    <property type="evidence" value="ECO:0007669"/>
    <property type="project" value="TreeGrafter"/>
</dbReference>
<dbReference type="GO" id="GO:0005524">
    <property type="term" value="F:ATP binding"/>
    <property type="evidence" value="ECO:0007669"/>
    <property type="project" value="UniProtKB-UniRule"/>
</dbReference>
<dbReference type="GO" id="GO:0003921">
    <property type="term" value="F:GMP synthase activity"/>
    <property type="evidence" value="ECO:0007669"/>
    <property type="project" value="InterPro"/>
</dbReference>
<dbReference type="CDD" id="cd01742">
    <property type="entry name" value="GATase1_GMP_Synthase"/>
    <property type="match status" value="1"/>
</dbReference>
<dbReference type="CDD" id="cd01997">
    <property type="entry name" value="GMP_synthase_C"/>
    <property type="match status" value="1"/>
</dbReference>
<dbReference type="FunFam" id="3.30.300.10:FF:000002">
    <property type="entry name" value="GMP synthase [glutamine-hydrolyzing]"/>
    <property type="match status" value="1"/>
</dbReference>
<dbReference type="FunFam" id="3.40.50.620:FF:000001">
    <property type="entry name" value="GMP synthase [glutamine-hydrolyzing]"/>
    <property type="match status" value="1"/>
</dbReference>
<dbReference type="FunFam" id="3.40.50.880:FF:000001">
    <property type="entry name" value="GMP synthase [glutamine-hydrolyzing]"/>
    <property type="match status" value="1"/>
</dbReference>
<dbReference type="Gene3D" id="3.30.300.10">
    <property type="match status" value="1"/>
</dbReference>
<dbReference type="Gene3D" id="3.40.50.880">
    <property type="match status" value="1"/>
</dbReference>
<dbReference type="Gene3D" id="3.40.50.620">
    <property type="entry name" value="HUPs"/>
    <property type="match status" value="1"/>
</dbReference>
<dbReference type="HAMAP" id="MF_00344">
    <property type="entry name" value="GMP_synthase"/>
    <property type="match status" value="1"/>
</dbReference>
<dbReference type="InterPro" id="IPR029062">
    <property type="entry name" value="Class_I_gatase-like"/>
</dbReference>
<dbReference type="InterPro" id="IPR017926">
    <property type="entry name" value="GATASE"/>
</dbReference>
<dbReference type="InterPro" id="IPR001674">
    <property type="entry name" value="GMP_synth_C"/>
</dbReference>
<dbReference type="InterPro" id="IPR004739">
    <property type="entry name" value="GMP_synth_GATase"/>
</dbReference>
<dbReference type="InterPro" id="IPR022955">
    <property type="entry name" value="GMP_synthase"/>
</dbReference>
<dbReference type="InterPro" id="IPR025777">
    <property type="entry name" value="GMPS_ATP_PPase_dom"/>
</dbReference>
<dbReference type="InterPro" id="IPR022310">
    <property type="entry name" value="NAD/GMP_synthase"/>
</dbReference>
<dbReference type="InterPro" id="IPR014729">
    <property type="entry name" value="Rossmann-like_a/b/a_fold"/>
</dbReference>
<dbReference type="NCBIfam" id="TIGR00884">
    <property type="entry name" value="guaA_Cterm"/>
    <property type="match status" value="1"/>
</dbReference>
<dbReference type="NCBIfam" id="TIGR00888">
    <property type="entry name" value="guaA_Nterm"/>
    <property type="match status" value="1"/>
</dbReference>
<dbReference type="NCBIfam" id="NF000848">
    <property type="entry name" value="PRK00074.1"/>
    <property type="match status" value="1"/>
</dbReference>
<dbReference type="PANTHER" id="PTHR11922:SF2">
    <property type="entry name" value="GMP SYNTHASE [GLUTAMINE-HYDROLYZING]"/>
    <property type="match status" value="1"/>
</dbReference>
<dbReference type="PANTHER" id="PTHR11922">
    <property type="entry name" value="GMP SYNTHASE-RELATED"/>
    <property type="match status" value="1"/>
</dbReference>
<dbReference type="Pfam" id="PF00117">
    <property type="entry name" value="GATase"/>
    <property type="match status" value="1"/>
</dbReference>
<dbReference type="Pfam" id="PF00958">
    <property type="entry name" value="GMP_synt_C"/>
    <property type="match status" value="1"/>
</dbReference>
<dbReference type="Pfam" id="PF02540">
    <property type="entry name" value="NAD_synthase"/>
    <property type="match status" value="1"/>
</dbReference>
<dbReference type="PRINTS" id="PR00097">
    <property type="entry name" value="ANTSNTHASEII"/>
</dbReference>
<dbReference type="PRINTS" id="PR00099">
    <property type="entry name" value="CPSGATASE"/>
</dbReference>
<dbReference type="PRINTS" id="PR00096">
    <property type="entry name" value="GATASE"/>
</dbReference>
<dbReference type="SUPFAM" id="SSF52402">
    <property type="entry name" value="Adenine nucleotide alpha hydrolases-like"/>
    <property type="match status" value="1"/>
</dbReference>
<dbReference type="SUPFAM" id="SSF52317">
    <property type="entry name" value="Class I glutamine amidotransferase-like"/>
    <property type="match status" value="1"/>
</dbReference>
<dbReference type="SUPFAM" id="SSF54810">
    <property type="entry name" value="GMP synthetase C-terminal dimerisation domain"/>
    <property type="match status" value="1"/>
</dbReference>
<dbReference type="PROSITE" id="PS51273">
    <property type="entry name" value="GATASE_TYPE_1"/>
    <property type="match status" value="1"/>
</dbReference>
<dbReference type="PROSITE" id="PS51553">
    <property type="entry name" value="GMPS_ATP_PPASE"/>
    <property type="match status" value="1"/>
</dbReference>
<protein>
    <recommendedName>
        <fullName evidence="1">GMP synthase [glutamine-hydrolyzing]</fullName>
        <ecNumber evidence="1">6.3.5.2</ecNumber>
    </recommendedName>
    <alternativeName>
        <fullName evidence="1">GMP synthetase</fullName>
    </alternativeName>
    <alternativeName>
        <fullName evidence="1">Glutamine amidotransferase</fullName>
    </alternativeName>
</protein>
<organism>
    <name type="scientific">Nostoc sp. (strain PCC 7120 / SAG 25.82 / UTEX 2576)</name>
    <dbReference type="NCBI Taxonomy" id="103690"/>
    <lineage>
        <taxon>Bacteria</taxon>
        <taxon>Bacillati</taxon>
        <taxon>Cyanobacteriota</taxon>
        <taxon>Cyanophyceae</taxon>
        <taxon>Nostocales</taxon>
        <taxon>Nostocaceae</taxon>
        <taxon>Nostoc</taxon>
    </lineage>
</organism>
<evidence type="ECO:0000255" key="1">
    <source>
        <dbReference type="HAMAP-Rule" id="MF_00344"/>
    </source>
</evidence>
<sequence>MNTAVTLLTEQAPQPIEEFGQLERQIIIILDFGSQYSELIARRIRETQVYSEVLSYRTPAEHLRQLNPKGIILSGGPSSVYSDRAPHCDPEIWNLGVPILGVCYGMQLMVNQLGGEVAKADRGEYGKASLHIDDPTDLLTNVEDGTTMWMSHGDSVTKMPPGFEVLAHTDNTPCAAVADHEKKLYGVQFHPEVVHSVGGLALIRNFVYHICECEPTWTTAAFVEEAIREVRAKVGDKRVLLALSGGVDSSTLAFLMHKAIGDQLTCVFIDQGFMRKYEPERLVKLFQEQFHIPVEYVNARDRFLDIMSGVTDPEEKRRRIGHEFIQVFEETSKNLGPFDYLAQGTLYPDVIESADTNVDPQTGERVAVKIKSHHNVGGLPKDLRFKLVEPLRKLFKDEVRKVGRSVGLPEEIVQRQPFPGPGLAIRILGEVTADRLNILRDADLIVRQEINQRGLYNEYWQAFAVLLPIRSVGVMGDQRTYAYPIVLRIVKSEDGMTADWARVPYDVLEAISNRIVNEVKGVNRVVFDITSKPPGTIEWE</sequence>
<name>GUAA_NOSS1</name>
<keyword id="KW-0067">ATP-binding</keyword>
<keyword id="KW-0315">Glutamine amidotransferase</keyword>
<keyword id="KW-0332">GMP biosynthesis</keyword>
<keyword id="KW-0436">Ligase</keyword>
<keyword id="KW-0547">Nucleotide-binding</keyword>
<keyword id="KW-0658">Purine biosynthesis</keyword>
<keyword id="KW-1185">Reference proteome</keyword>
<comment type="function">
    <text evidence="1">Catalyzes the synthesis of GMP from XMP.</text>
</comment>
<comment type="catalytic activity">
    <reaction evidence="1">
        <text>XMP + L-glutamine + ATP + H2O = GMP + L-glutamate + AMP + diphosphate + 2 H(+)</text>
        <dbReference type="Rhea" id="RHEA:11680"/>
        <dbReference type="ChEBI" id="CHEBI:15377"/>
        <dbReference type="ChEBI" id="CHEBI:15378"/>
        <dbReference type="ChEBI" id="CHEBI:29985"/>
        <dbReference type="ChEBI" id="CHEBI:30616"/>
        <dbReference type="ChEBI" id="CHEBI:33019"/>
        <dbReference type="ChEBI" id="CHEBI:57464"/>
        <dbReference type="ChEBI" id="CHEBI:58115"/>
        <dbReference type="ChEBI" id="CHEBI:58359"/>
        <dbReference type="ChEBI" id="CHEBI:456215"/>
        <dbReference type="EC" id="6.3.5.2"/>
    </reaction>
</comment>
<comment type="pathway">
    <text evidence="1">Purine metabolism; GMP biosynthesis; GMP from XMP (L-Gln route): step 1/1.</text>
</comment>
<comment type="subunit">
    <text evidence="1">Homodimer.</text>
</comment>
<reference key="1">
    <citation type="journal article" date="2001" name="DNA Res.">
        <title>Complete genomic sequence of the filamentous nitrogen-fixing cyanobacterium Anabaena sp. strain PCC 7120.</title>
        <authorList>
            <person name="Kaneko T."/>
            <person name="Nakamura Y."/>
            <person name="Wolk C.P."/>
            <person name="Kuritz T."/>
            <person name="Sasamoto S."/>
            <person name="Watanabe A."/>
            <person name="Iriguchi M."/>
            <person name="Ishikawa A."/>
            <person name="Kawashima K."/>
            <person name="Kimura T."/>
            <person name="Kishida Y."/>
            <person name="Kohara M."/>
            <person name="Matsumoto M."/>
            <person name="Matsuno A."/>
            <person name="Muraki A."/>
            <person name="Nakazaki N."/>
            <person name="Shimpo S."/>
            <person name="Sugimoto M."/>
            <person name="Takazawa M."/>
            <person name="Yamada M."/>
            <person name="Yasuda M."/>
            <person name="Tabata S."/>
        </authorList>
    </citation>
    <scope>NUCLEOTIDE SEQUENCE [LARGE SCALE GENOMIC DNA]</scope>
    <source>
        <strain>PCC 7120 / SAG 25.82 / UTEX 2576</strain>
    </source>
</reference>
<proteinExistence type="inferred from homology"/>
<feature type="chain" id="PRO_0000140087" description="GMP synthase [glutamine-hydrolyzing]">
    <location>
        <begin position="1"/>
        <end position="540"/>
    </location>
</feature>
<feature type="domain" description="Glutamine amidotransferase type-1" evidence="1">
    <location>
        <begin position="26"/>
        <end position="216"/>
    </location>
</feature>
<feature type="domain" description="GMPS ATP-PPase" evidence="1">
    <location>
        <begin position="217"/>
        <end position="415"/>
    </location>
</feature>
<feature type="active site" description="Nucleophile" evidence="1">
    <location>
        <position position="103"/>
    </location>
</feature>
<feature type="active site" evidence="1">
    <location>
        <position position="190"/>
    </location>
</feature>
<feature type="active site" evidence="1">
    <location>
        <position position="192"/>
    </location>
</feature>
<feature type="binding site" evidence="1">
    <location>
        <begin position="244"/>
        <end position="250"/>
    </location>
    <ligand>
        <name>ATP</name>
        <dbReference type="ChEBI" id="CHEBI:30616"/>
    </ligand>
</feature>